<proteinExistence type="inferred from homology"/>
<protein>
    <recommendedName>
        <fullName evidence="1">GTPase Obg</fullName>
        <ecNumber evidence="1">3.6.5.-</ecNumber>
    </recommendedName>
    <alternativeName>
        <fullName evidence="1">GTP-binding protein Obg</fullName>
    </alternativeName>
</protein>
<organism>
    <name type="scientific">Bacteroides fragilis (strain ATCC 25285 / DSM 2151 / CCUG 4856 / JCM 11019 / LMG 10263 / NCTC 9343 / Onslow / VPI 2553 / EN-2)</name>
    <dbReference type="NCBI Taxonomy" id="272559"/>
    <lineage>
        <taxon>Bacteria</taxon>
        <taxon>Pseudomonadati</taxon>
        <taxon>Bacteroidota</taxon>
        <taxon>Bacteroidia</taxon>
        <taxon>Bacteroidales</taxon>
        <taxon>Bacteroidaceae</taxon>
        <taxon>Bacteroides</taxon>
    </lineage>
</organism>
<keyword id="KW-0963">Cytoplasm</keyword>
<keyword id="KW-0342">GTP-binding</keyword>
<keyword id="KW-0378">Hydrolase</keyword>
<keyword id="KW-0460">Magnesium</keyword>
<keyword id="KW-0479">Metal-binding</keyword>
<keyword id="KW-0547">Nucleotide-binding</keyword>
<feature type="chain" id="PRO_0000385732" description="GTPase Obg">
    <location>
        <begin position="1"/>
        <end position="388"/>
    </location>
</feature>
<feature type="domain" description="Obg" evidence="2">
    <location>
        <begin position="4"/>
        <end position="162"/>
    </location>
</feature>
<feature type="domain" description="OBG-type G" evidence="1">
    <location>
        <begin position="163"/>
        <end position="329"/>
    </location>
</feature>
<feature type="region of interest" description="Disordered" evidence="3">
    <location>
        <begin position="18"/>
        <end position="45"/>
    </location>
</feature>
<feature type="region of interest" description="Disordered" evidence="3">
    <location>
        <begin position="352"/>
        <end position="388"/>
    </location>
</feature>
<feature type="compositionally biased region" description="Gly residues" evidence="3">
    <location>
        <begin position="36"/>
        <end position="45"/>
    </location>
</feature>
<feature type="compositionally biased region" description="Acidic residues" evidence="3">
    <location>
        <begin position="356"/>
        <end position="388"/>
    </location>
</feature>
<feature type="binding site" evidence="1">
    <location>
        <begin position="169"/>
        <end position="176"/>
    </location>
    <ligand>
        <name>GTP</name>
        <dbReference type="ChEBI" id="CHEBI:37565"/>
    </ligand>
</feature>
<feature type="binding site" evidence="1">
    <location>
        <position position="176"/>
    </location>
    <ligand>
        <name>Mg(2+)</name>
        <dbReference type="ChEBI" id="CHEBI:18420"/>
    </ligand>
</feature>
<feature type="binding site" evidence="1">
    <location>
        <begin position="194"/>
        <end position="198"/>
    </location>
    <ligand>
        <name>GTP</name>
        <dbReference type="ChEBI" id="CHEBI:37565"/>
    </ligand>
</feature>
<feature type="binding site" evidence="1">
    <location>
        <position position="196"/>
    </location>
    <ligand>
        <name>Mg(2+)</name>
        <dbReference type="ChEBI" id="CHEBI:18420"/>
    </ligand>
</feature>
<feature type="binding site" evidence="1">
    <location>
        <begin position="216"/>
        <end position="219"/>
    </location>
    <ligand>
        <name>GTP</name>
        <dbReference type="ChEBI" id="CHEBI:37565"/>
    </ligand>
</feature>
<feature type="binding site" evidence="1">
    <location>
        <begin position="283"/>
        <end position="286"/>
    </location>
    <ligand>
        <name>GTP</name>
        <dbReference type="ChEBI" id="CHEBI:37565"/>
    </ligand>
</feature>
<feature type="binding site" evidence="1">
    <location>
        <begin position="310"/>
        <end position="312"/>
    </location>
    <ligand>
        <name>GTP</name>
        <dbReference type="ChEBI" id="CHEBI:37565"/>
    </ligand>
</feature>
<evidence type="ECO:0000255" key="1">
    <source>
        <dbReference type="HAMAP-Rule" id="MF_01454"/>
    </source>
</evidence>
<evidence type="ECO:0000255" key="2">
    <source>
        <dbReference type="PROSITE-ProRule" id="PRU01231"/>
    </source>
</evidence>
<evidence type="ECO:0000256" key="3">
    <source>
        <dbReference type="SAM" id="MobiDB-lite"/>
    </source>
</evidence>
<evidence type="ECO:0000305" key="4"/>
<reference key="1">
    <citation type="journal article" date="2005" name="Science">
        <title>Extensive DNA inversions in the B. fragilis genome control variable gene expression.</title>
        <authorList>
            <person name="Cerdeno-Tarraga A.-M."/>
            <person name="Patrick S."/>
            <person name="Crossman L.C."/>
            <person name="Blakely G."/>
            <person name="Abratt V."/>
            <person name="Lennard N."/>
            <person name="Poxton I."/>
            <person name="Duerden B."/>
            <person name="Harris B."/>
            <person name="Quail M.A."/>
            <person name="Barron A."/>
            <person name="Clark L."/>
            <person name="Corton C."/>
            <person name="Doggett J."/>
            <person name="Holden M.T.G."/>
            <person name="Larke N."/>
            <person name="Line A."/>
            <person name="Lord A."/>
            <person name="Norbertczak H."/>
            <person name="Ormond D."/>
            <person name="Price C."/>
            <person name="Rabbinowitsch E."/>
            <person name="Woodward J."/>
            <person name="Barrell B.G."/>
            <person name="Parkhill J."/>
        </authorList>
    </citation>
    <scope>NUCLEOTIDE SEQUENCE [LARGE SCALE GENOMIC DNA]</scope>
    <source>
        <strain>ATCC 25285 / DSM 2151 / CCUG 4856 / JCM 11019 / LMG 10263 / NCTC 9343 / Onslow / VPI 2553 / EN-2</strain>
    </source>
</reference>
<comment type="function">
    <text evidence="1">An essential GTPase which binds GTP, GDP and possibly (p)ppGpp with moderate affinity, with high nucleotide exchange rates and a fairly low GTP hydrolysis rate. Plays a role in control of the cell cycle, stress response, ribosome biogenesis and in those bacteria that undergo differentiation, in morphogenesis control.</text>
</comment>
<comment type="cofactor">
    <cofactor evidence="1">
        <name>Mg(2+)</name>
        <dbReference type="ChEBI" id="CHEBI:18420"/>
    </cofactor>
</comment>
<comment type="subunit">
    <text evidence="1">Monomer.</text>
</comment>
<comment type="subcellular location">
    <subcellularLocation>
        <location evidence="1">Cytoplasm</location>
    </subcellularLocation>
</comment>
<comment type="similarity">
    <text evidence="1">Belongs to the TRAFAC class OBG-HflX-like GTPase superfamily. OBG GTPase family.</text>
</comment>
<comment type="sequence caution" evidence="4">
    <conflict type="erroneous initiation">
        <sequence resource="EMBL-CDS" id="CAH06770"/>
    </conflict>
    <text>Extended N-terminus.</text>
</comment>
<sequence>MAESNFVDYVKIYCRSGKGGRGSTHMRREKYTPNGGPDGGDGGRGGHVILRGNRNYWTLLHLRYDRHAMAGHGESGSKNRSFGKDGADKIIEVPCGTVVYNAETGEYVCDVTEHGQEVILLKGGRGGLGNWHFKTATRQAPRFAQPGEPMQEMTVILELKLLADVGLVGFPNAGKSTLLSAISAAKPKIADYPFTTLEPNLGIVSYRDGQSFVMADIPGIIEGASEGKGLGLRFLRHIERNSLLLFMIPADSDDIRKDYEVLLNELKTFNPEMLDKQRVLAITKSDMLDQELMDEIEPTLPEGIPHVFISSVSGLGISVLKDILWTELNKESNKIEAIVHRPKDVSRLQQELKDMGEDEELDYEYEDDGDGDEDDLDYEYEEEDWEDK</sequence>
<dbReference type="EC" id="3.6.5.-" evidence="1"/>
<dbReference type="EMBL" id="CR626927">
    <property type="protein sequence ID" value="CAH06770.1"/>
    <property type="status" value="ALT_INIT"/>
    <property type="molecule type" value="Genomic_DNA"/>
</dbReference>
<dbReference type="SMR" id="Q5LGG9"/>
<dbReference type="PaxDb" id="272559-BF9343_0989"/>
<dbReference type="KEGG" id="bfs:BF9343_0989"/>
<dbReference type="eggNOG" id="COG0536">
    <property type="taxonomic scope" value="Bacteria"/>
</dbReference>
<dbReference type="HOGENOM" id="CLU_011747_2_0_10"/>
<dbReference type="Proteomes" id="UP000006731">
    <property type="component" value="Chromosome"/>
</dbReference>
<dbReference type="GO" id="GO:0005737">
    <property type="term" value="C:cytoplasm"/>
    <property type="evidence" value="ECO:0007669"/>
    <property type="project" value="UniProtKB-SubCell"/>
</dbReference>
<dbReference type="GO" id="GO:0005525">
    <property type="term" value="F:GTP binding"/>
    <property type="evidence" value="ECO:0007669"/>
    <property type="project" value="UniProtKB-UniRule"/>
</dbReference>
<dbReference type="GO" id="GO:0003924">
    <property type="term" value="F:GTPase activity"/>
    <property type="evidence" value="ECO:0007669"/>
    <property type="project" value="UniProtKB-UniRule"/>
</dbReference>
<dbReference type="GO" id="GO:0000287">
    <property type="term" value="F:magnesium ion binding"/>
    <property type="evidence" value="ECO:0007669"/>
    <property type="project" value="InterPro"/>
</dbReference>
<dbReference type="GO" id="GO:0042254">
    <property type="term" value="P:ribosome biogenesis"/>
    <property type="evidence" value="ECO:0007669"/>
    <property type="project" value="UniProtKB-UniRule"/>
</dbReference>
<dbReference type="CDD" id="cd01898">
    <property type="entry name" value="Obg"/>
    <property type="match status" value="1"/>
</dbReference>
<dbReference type="FunFam" id="2.70.210.12:FF:000001">
    <property type="entry name" value="GTPase Obg"/>
    <property type="match status" value="1"/>
</dbReference>
<dbReference type="Gene3D" id="2.70.210.12">
    <property type="entry name" value="GTP1/OBG domain"/>
    <property type="match status" value="1"/>
</dbReference>
<dbReference type="Gene3D" id="3.40.50.300">
    <property type="entry name" value="P-loop containing nucleotide triphosphate hydrolases"/>
    <property type="match status" value="1"/>
</dbReference>
<dbReference type="HAMAP" id="MF_01454">
    <property type="entry name" value="GTPase_Obg"/>
    <property type="match status" value="1"/>
</dbReference>
<dbReference type="InterPro" id="IPR031167">
    <property type="entry name" value="G_OBG"/>
</dbReference>
<dbReference type="InterPro" id="IPR006073">
    <property type="entry name" value="GTP-bd"/>
</dbReference>
<dbReference type="InterPro" id="IPR014100">
    <property type="entry name" value="GTP-bd_Obg/CgtA"/>
</dbReference>
<dbReference type="InterPro" id="IPR006074">
    <property type="entry name" value="GTP1-OBG_CS"/>
</dbReference>
<dbReference type="InterPro" id="IPR006169">
    <property type="entry name" value="GTP1_OBG_dom"/>
</dbReference>
<dbReference type="InterPro" id="IPR036726">
    <property type="entry name" value="GTP1_OBG_dom_sf"/>
</dbReference>
<dbReference type="InterPro" id="IPR045086">
    <property type="entry name" value="OBG_GTPase"/>
</dbReference>
<dbReference type="InterPro" id="IPR027417">
    <property type="entry name" value="P-loop_NTPase"/>
</dbReference>
<dbReference type="NCBIfam" id="TIGR02729">
    <property type="entry name" value="Obg_CgtA"/>
    <property type="match status" value="1"/>
</dbReference>
<dbReference type="NCBIfam" id="NF008955">
    <property type="entry name" value="PRK12297.1"/>
    <property type="match status" value="1"/>
</dbReference>
<dbReference type="NCBIfam" id="NF008956">
    <property type="entry name" value="PRK12299.1"/>
    <property type="match status" value="1"/>
</dbReference>
<dbReference type="PANTHER" id="PTHR11702">
    <property type="entry name" value="DEVELOPMENTALLY REGULATED GTP-BINDING PROTEIN-RELATED"/>
    <property type="match status" value="1"/>
</dbReference>
<dbReference type="PANTHER" id="PTHR11702:SF31">
    <property type="entry name" value="MITOCHONDRIAL RIBOSOME-ASSOCIATED GTPASE 2"/>
    <property type="match status" value="1"/>
</dbReference>
<dbReference type="Pfam" id="PF01018">
    <property type="entry name" value="GTP1_OBG"/>
    <property type="match status" value="1"/>
</dbReference>
<dbReference type="Pfam" id="PF01926">
    <property type="entry name" value="MMR_HSR1"/>
    <property type="match status" value="1"/>
</dbReference>
<dbReference type="PIRSF" id="PIRSF002401">
    <property type="entry name" value="GTP_bd_Obg/CgtA"/>
    <property type="match status" value="1"/>
</dbReference>
<dbReference type="PRINTS" id="PR00326">
    <property type="entry name" value="GTP1OBG"/>
</dbReference>
<dbReference type="SUPFAM" id="SSF82051">
    <property type="entry name" value="Obg GTP-binding protein N-terminal domain"/>
    <property type="match status" value="1"/>
</dbReference>
<dbReference type="SUPFAM" id="SSF52540">
    <property type="entry name" value="P-loop containing nucleoside triphosphate hydrolases"/>
    <property type="match status" value="1"/>
</dbReference>
<dbReference type="PROSITE" id="PS51710">
    <property type="entry name" value="G_OBG"/>
    <property type="match status" value="1"/>
</dbReference>
<dbReference type="PROSITE" id="PS00905">
    <property type="entry name" value="GTP1_OBG"/>
    <property type="match status" value="1"/>
</dbReference>
<dbReference type="PROSITE" id="PS51883">
    <property type="entry name" value="OBG"/>
    <property type="match status" value="1"/>
</dbReference>
<name>OBG_BACFN</name>
<gene>
    <name evidence="1" type="primary">obg</name>
    <name type="ordered locus">BF1033</name>
</gene>
<accession>Q5LGG9</accession>